<reference evidence="30 33" key="1">
    <citation type="journal article" date="1992" name="Cell">
        <title>Molecular cloning and nucleic acid binding properties of the GAP-associated tyrosine phosphoprotein p62.</title>
        <authorList>
            <person name="Wong G."/>
            <person name="Muller O."/>
            <person name="Clark R."/>
            <person name="Conroy L."/>
            <person name="Moran M.F."/>
            <person name="Polakis P."/>
            <person name="McCormick F."/>
        </authorList>
    </citation>
    <scope>NUCLEOTIDE SEQUENCE [MRNA] (ISOFORM 1)</scope>
    <scope>SUBCELLULAR LOCATION</scope>
    <scope>RNA-BINDING</scope>
    <scope>METHYLATION</scope>
    <scope>INTERACTION WITH RASA1</scope>
    <source>
        <tissue evidence="33">Fetal brain</tissue>
    </source>
</reference>
<reference evidence="30 34" key="2">
    <citation type="journal article" date="1997" name="J. Biol. Chem.">
        <title>A role for Sam68 in cell cycle progression antagonized by a spliced variant within the KH domain.</title>
        <authorList>
            <person name="Barlat I."/>
            <person name="Maurier F."/>
            <person name="Duchesne M."/>
            <person name="Guitard E."/>
            <person name="Tocque B."/>
            <person name="Schweighoffer F."/>
        </authorList>
    </citation>
    <scope>NUCLEOTIDE SEQUENCE [MRNA] (ISOFORM 3)</scope>
    <scope>FUNCTION</scope>
    <scope>TISSUE SPECIFICITY</scope>
    <scope>DEVELOPMENTAL STAGE</scope>
    <source>
        <tissue evidence="24">Placenta</tissue>
    </source>
</reference>
<reference evidence="30 38" key="3">
    <citation type="journal article" date="2004" name="Nat. Genet.">
        <title>Complete sequencing and characterization of 21,243 full-length human cDNAs.</title>
        <authorList>
            <person name="Ota T."/>
            <person name="Suzuki Y."/>
            <person name="Nishikawa T."/>
            <person name="Otsuki T."/>
            <person name="Sugiyama T."/>
            <person name="Irie R."/>
            <person name="Wakamatsu A."/>
            <person name="Hayashi K."/>
            <person name="Sato H."/>
            <person name="Nagai K."/>
            <person name="Kimura K."/>
            <person name="Makita H."/>
            <person name="Sekine M."/>
            <person name="Obayashi M."/>
            <person name="Nishi T."/>
            <person name="Shibahara T."/>
            <person name="Tanaka T."/>
            <person name="Ishii S."/>
            <person name="Yamamoto J."/>
            <person name="Saito K."/>
            <person name="Kawai Y."/>
            <person name="Isono Y."/>
            <person name="Nakamura Y."/>
            <person name="Nagahari K."/>
            <person name="Murakami K."/>
            <person name="Yasuda T."/>
            <person name="Iwayanagi T."/>
            <person name="Wagatsuma M."/>
            <person name="Shiratori A."/>
            <person name="Sudo H."/>
            <person name="Hosoiri T."/>
            <person name="Kaku Y."/>
            <person name="Kodaira H."/>
            <person name="Kondo H."/>
            <person name="Sugawara M."/>
            <person name="Takahashi M."/>
            <person name="Kanda K."/>
            <person name="Yokoi T."/>
            <person name="Furuya T."/>
            <person name="Kikkawa E."/>
            <person name="Omura Y."/>
            <person name="Abe K."/>
            <person name="Kamihara K."/>
            <person name="Katsuta N."/>
            <person name="Sato K."/>
            <person name="Tanikawa M."/>
            <person name="Yamazaki M."/>
            <person name="Ninomiya K."/>
            <person name="Ishibashi T."/>
            <person name="Yamashita H."/>
            <person name="Murakawa K."/>
            <person name="Fujimori K."/>
            <person name="Tanai H."/>
            <person name="Kimata M."/>
            <person name="Watanabe M."/>
            <person name="Hiraoka S."/>
            <person name="Chiba Y."/>
            <person name="Ishida S."/>
            <person name="Ono Y."/>
            <person name="Takiguchi S."/>
            <person name="Watanabe S."/>
            <person name="Yosida M."/>
            <person name="Hotuta T."/>
            <person name="Kusano J."/>
            <person name="Kanehori K."/>
            <person name="Takahashi-Fujii A."/>
            <person name="Hara H."/>
            <person name="Tanase T.-O."/>
            <person name="Nomura Y."/>
            <person name="Togiya S."/>
            <person name="Komai F."/>
            <person name="Hara R."/>
            <person name="Takeuchi K."/>
            <person name="Arita M."/>
            <person name="Imose N."/>
            <person name="Musashino K."/>
            <person name="Yuuki H."/>
            <person name="Oshima A."/>
            <person name="Sasaki N."/>
            <person name="Aotsuka S."/>
            <person name="Yoshikawa Y."/>
            <person name="Matsunawa H."/>
            <person name="Ichihara T."/>
            <person name="Shiohata N."/>
            <person name="Sano S."/>
            <person name="Moriya S."/>
            <person name="Momiyama H."/>
            <person name="Satoh N."/>
            <person name="Takami S."/>
            <person name="Terashima Y."/>
            <person name="Suzuki O."/>
            <person name="Nakagawa S."/>
            <person name="Senoh A."/>
            <person name="Mizoguchi H."/>
            <person name="Goto Y."/>
            <person name="Shimizu F."/>
            <person name="Wakebe H."/>
            <person name="Hishigaki H."/>
            <person name="Watanabe T."/>
            <person name="Sugiyama A."/>
            <person name="Takemoto M."/>
            <person name="Kawakami B."/>
            <person name="Yamazaki M."/>
            <person name="Watanabe K."/>
            <person name="Kumagai A."/>
            <person name="Itakura S."/>
            <person name="Fukuzumi Y."/>
            <person name="Fujimori Y."/>
            <person name="Komiyama M."/>
            <person name="Tashiro H."/>
            <person name="Tanigami A."/>
            <person name="Fujiwara T."/>
            <person name="Ono T."/>
            <person name="Yamada K."/>
            <person name="Fujii Y."/>
            <person name="Ozaki K."/>
            <person name="Hirao M."/>
            <person name="Ohmori Y."/>
            <person name="Kawabata A."/>
            <person name="Hikiji T."/>
            <person name="Kobatake N."/>
            <person name="Inagaki H."/>
            <person name="Ikema Y."/>
            <person name="Okamoto S."/>
            <person name="Okitani R."/>
            <person name="Kawakami T."/>
            <person name="Noguchi S."/>
            <person name="Itoh T."/>
            <person name="Shigeta K."/>
            <person name="Senba T."/>
            <person name="Matsumura K."/>
            <person name="Nakajima Y."/>
            <person name="Mizuno T."/>
            <person name="Morinaga M."/>
            <person name="Sasaki M."/>
            <person name="Togashi T."/>
            <person name="Oyama M."/>
            <person name="Hata H."/>
            <person name="Watanabe M."/>
            <person name="Komatsu T."/>
            <person name="Mizushima-Sugano J."/>
            <person name="Satoh T."/>
            <person name="Shirai Y."/>
            <person name="Takahashi Y."/>
            <person name="Nakagawa K."/>
            <person name="Okumura K."/>
            <person name="Nagase T."/>
            <person name="Nomura N."/>
            <person name="Kikuchi H."/>
            <person name="Masuho Y."/>
            <person name="Yamashita R."/>
            <person name="Nakai K."/>
            <person name="Yada T."/>
            <person name="Nakamura Y."/>
            <person name="Ohara O."/>
            <person name="Isogai T."/>
            <person name="Sugano S."/>
        </authorList>
    </citation>
    <scope>NUCLEOTIDE SEQUENCE [LARGE SCALE MRNA] (ISOFORM 2)</scope>
    <source>
        <tissue evidence="38">Brain</tissue>
    </source>
</reference>
<reference evidence="30 37" key="4">
    <citation type="journal article" date="2006" name="Nature">
        <title>The DNA sequence and biological annotation of human chromosome 1.</title>
        <authorList>
            <person name="Gregory S.G."/>
            <person name="Barlow K.F."/>
            <person name="McLay K.E."/>
            <person name="Kaul R."/>
            <person name="Swarbreck D."/>
            <person name="Dunham A."/>
            <person name="Scott C.E."/>
            <person name="Howe K.L."/>
            <person name="Woodfine K."/>
            <person name="Spencer C.C.A."/>
            <person name="Jones M.C."/>
            <person name="Gillson C."/>
            <person name="Searle S."/>
            <person name="Zhou Y."/>
            <person name="Kokocinski F."/>
            <person name="McDonald L."/>
            <person name="Evans R."/>
            <person name="Phillips K."/>
            <person name="Atkinson A."/>
            <person name="Cooper R."/>
            <person name="Jones C."/>
            <person name="Hall R.E."/>
            <person name="Andrews T.D."/>
            <person name="Lloyd C."/>
            <person name="Ainscough R."/>
            <person name="Almeida J.P."/>
            <person name="Ambrose K.D."/>
            <person name="Anderson F."/>
            <person name="Andrew R.W."/>
            <person name="Ashwell R.I.S."/>
            <person name="Aubin K."/>
            <person name="Babbage A.K."/>
            <person name="Bagguley C.L."/>
            <person name="Bailey J."/>
            <person name="Beasley H."/>
            <person name="Bethel G."/>
            <person name="Bird C.P."/>
            <person name="Bray-Allen S."/>
            <person name="Brown J.Y."/>
            <person name="Brown A.J."/>
            <person name="Buckley D."/>
            <person name="Burton J."/>
            <person name="Bye J."/>
            <person name="Carder C."/>
            <person name="Chapman J.C."/>
            <person name="Clark S.Y."/>
            <person name="Clarke G."/>
            <person name="Clee C."/>
            <person name="Cobley V."/>
            <person name="Collier R.E."/>
            <person name="Corby N."/>
            <person name="Coville G.J."/>
            <person name="Davies J."/>
            <person name="Deadman R."/>
            <person name="Dunn M."/>
            <person name="Earthrowl M."/>
            <person name="Ellington A.G."/>
            <person name="Errington H."/>
            <person name="Frankish A."/>
            <person name="Frankland J."/>
            <person name="French L."/>
            <person name="Garner P."/>
            <person name="Garnett J."/>
            <person name="Gay L."/>
            <person name="Ghori M.R.J."/>
            <person name="Gibson R."/>
            <person name="Gilby L.M."/>
            <person name="Gillett W."/>
            <person name="Glithero R.J."/>
            <person name="Grafham D.V."/>
            <person name="Griffiths C."/>
            <person name="Griffiths-Jones S."/>
            <person name="Grocock R."/>
            <person name="Hammond S."/>
            <person name="Harrison E.S.I."/>
            <person name="Hart E."/>
            <person name="Haugen E."/>
            <person name="Heath P.D."/>
            <person name="Holmes S."/>
            <person name="Holt K."/>
            <person name="Howden P.J."/>
            <person name="Hunt A.R."/>
            <person name="Hunt S.E."/>
            <person name="Hunter G."/>
            <person name="Isherwood J."/>
            <person name="James R."/>
            <person name="Johnson C."/>
            <person name="Johnson D."/>
            <person name="Joy A."/>
            <person name="Kay M."/>
            <person name="Kershaw J.K."/>
            <person name="Kibukawa M."/>
            <person name="Kimberley A.M."/>
            <person name="King A."/>
            <person name="Knights A.J."/>
            <person name="Lad H."/>
            <person name="Laird G."/>
            <person name="Lawlor S."/>
            <person name="Leongamornlert D.A."/>
            <person name="Lloyd D.M."/>
            <person name="Loveland J."/>
            <person name="Lovell J."/>
            <person name="Lush M.J."/>
            <person name="Lyne R."/>
            <person name="Martin S."/>
            <person name="Mashreghi-Mohammadi M."/>
            <person name="Matthews L."/>
            <person name="Matthews N.S.W."/>
            <person name="McLaren S."/>
            <person name="Milne S."/>
            <person name="Mistry S."/>
            <person name="Moore M.J.F."/>
            <person name="Nickerson T."/>
            <person name="O'Dell C.N."/>
            <person name="Oliver K."/>
            <person name="Palmeiri A."/>
            <person name="Palmer S.A."/>
            <person name="Parker A."/>
            <person name="Patel D."/>
            <person name="Pearce A.V."/>
            <person name="Peck A.I."/>
            <person name="Pelan S."/>
            <person name="Phelps K."/>
            <person name="Phillimore B.J."/>
            <person name="Plumb R."/>
            <person name="Rajan J."/>
            <person name="Raymond C."/>
            <person name="Rouse G."/>
            <person name="Saenphimmachak C."/>
            <person name="Sehra H.K."/>
            <person name="Sheridan E."/>
            <person name="Shownkeen R."/>
            <person name="Sims S."/>
            <person name="Skuce C.D."/>
            <person name="Smith M."/>
            <person name="Steward C."/>
            <person name="Subramanian S."/>
            <person name="Sycamore N."/>
            <person name="Tracey A."/>
            <person name="Tromans A."/>
            <person name="Van Helmond Z."/>
            <person name="Wall M."/>
            <person name="Wallis J.M."/>
            <person name="White S."/>
            <person name="Whitehead S.L."/>
            <person name="Wilkinson J.E."/>
            <person name="Willey D.L."/>
            <person name="Williams H."/>
            <person name="Wilming L."/>
            <person name="Wray P.W."/>
            <person name="Wu Z."/>
            <person name="Coulson A."/>
            <person name="Vaudin M."/>
            <person name="Sulston J.E."/>
            <person name="Durbin R.M."/>
            <person name="Hubbard T."/>
            <person name="Wooster R."/>
            <person name="Dunham I."/>
            <person name="Carter N.P."/>
            <person name="McVean G."/>
            <person name="Ross M.T."/>
            <person name="Harrow J."/>
            <person name="Olson M.V."/>
            <person name="Beck S."/>
            <person name="Rogers J."/>
            <person name="Bentley D.R."/>
        </authorList>
    </citation>
    <scope>NUCLEOTIDE SEQUENCE [LARGE SCALE GENOMIC DNA]</scope>
</reference>
<reference key="5">
    <citation type="submission" date="2005-09" db="EMBL/GenBank/DDBJ databases">
        <authorList>
            <person name="Mural R.J."/>
            <person name="Istrail S."/>
            <person name="Sutton G.G."/>
            <person name="Florea L."/>
            <person name="Halpern A.L."/>
            <person name="Mobarry C.M."/>
            <person name="Lippert R."/>
            <person name="Walenz B."/>
            <person name="Shatkay H."/>
            <person name="Dew I."/>
            <person name="Miller J.R."/>
            <person name="Flanigan M.J."/>
            <person name="Edwards N.J."/>
            <person name="Bolanos R."/>
            <person name="Fasulo D."/>
            <person name="Halldorsson B.V."/>
            <person name="Hannenhalli S."/>
            <person name="Turner R."/>
            <person name="Yooseph S."/>
            <person name="Lu F."/>
            <person name="Nusskern D.R."/>
            <person name="Shue B.C."/>
            <person name="Zheng X.H."/>
            <person name="Zhong F."/>
            <person name="Delcher A.L."/>
            <person name="Huson D.H."/>
            <person name="Kravitz S.A."/>
            <person name="Mouchard L."/>
            <person name="Reinert K."/>
            <person name="Remington K.A."/>
            <person name="Clark A.G."/>
            <person name="Waterman M.S."/>
            <person name="Eichler E.E."/>
            <person name="Adams M.D."/>
            <person name="Hunkapiller M.W."/>
            <person name="Myers E.W."/>
            <person name="Venter J.C."/>
        </authorList>
    </citation>
    <scope>NUCLEOTIDE SEQUENCE [LARGE SCALE GENOMIC DNA]</scope>
</reference>
<reference evidence="30 35" key="6">
    <citation type="journal article" date="2004" name="Genome Res.">
        <title>The status, quality, and expansion of the NIH full-length cDNA project: the Mammalian Gene Collection (MGC).</title>
        <authorList>
            <consortium name="The MGC Project Team"/>
        </authorList>
    </citation>
    <scope>NUCLEOTIDE SEQUENCE [LARGE SCALE MRNA] (ISOFORM 1)</scope>
    <source>
        <tissue evidence="36">Lymph</tissue>
        <tissue evidence="35">Placenta</tissue>
    </source>
</reference>
<reference key="7">
    <citation type="submission" date="2008-12" db="UniProtKB">
        <authorList>
            <person name="Bienvenut W.V."/>
            <person name="Lilla S."/>
            <person name="von Kriegsheim A."/>
            <person name="Lempens A."/>
            <person name="Kolch W."/>
        </authorList>
    </citation>
    <scope>PROTEIN SEQUENCE OF 18-31; 57-96; 103-131; 139-152; 176-185; 292-302 AND 316-340</scope>
    <scope>METHYLATION AT ARG-320; ARG-331 AND ARG-340</scope>
    <scope>IDENTIFICATION BY MASS SPECTROMETRY</scope>
    <source>
        <tissue>Ovarian carcinoma</tissue>
    </source>
</reference>
<reference evidence="30" key="8">
    <citation type="journal article" date="1997" name="J. Biol. Chem.">
        <title>Interaction between Sam68 and Src family tyrosine kinases, Fyn and Lck, in T cell receptor signaling.</title>
        <authorList>
            <person name="Fusaki N."/>
            <person name="Iwamatsu A."/>
            <person name="Iwashima M."/>
            <person name="Fujisawa J."/>
        </authorList>
    </citation>
    <scope>PROTEIN SEQUENCE OF 102-110 AND 169-175 (ISOFORMS 1/2)</scope>
    <scope>FUNCTION</scope>
    <scope>PHOSPHORYLATION</scope>
    <scope>INTERACTION WITH LCK; FYN; PTPN6; PLCG1; GRB2; CBL; JAK3 AND PIK3R1</scope>
</reference>
<reference evidence="30" key="9">
    <citation type="journal article" date="1999" name="Hum. Mol. Genet.">
        <title>T-STAR/ETOILE: a novel relative of SAM68 that interacts with an RNA-binding protein implicated in spermatogenesis.</title>
        <authorList>
            <person name="Venables J.P."/>
            <person name="Vernet C."/>
            <person name="Chew S.L."/>
            <person name="Elliott D.J."/>
            <person name="Cowmeadow R.B."/>
            <person name="Wu J."/>
            <person name="Cooke H.J."/>
            <person name="Artzt K."/>
            <person name="Eperon I.C."/>
        </authorList>
    </citation>
    <scope>INTERACTION WITH KHDRBS3</scope>
    <source>
        <tissue evidence="7">Testis</tissue>
    </source>
</reference>
<reference key="10">
    <citation type="journal article" date="2000" name="Mol. Cell. Biol.">
        <title>Sik (BRK) phosphorylates Sam68 in the nucleus and negatively regulates its RNA binding ability.</title>
        <authorList>
            <person name="Derry J.J."/>
            <person name="Richard S."/>
            <person name="Valderrama Carvajal H."/>
            <person name="Ye X."/>
            <person name="Vasioukhin V."/>
            <person name="Cochrane A.W."/>
            <person name="Chen T."/>
            <person name="Tyner A.L."/>
        </authorList>
    </citation>
    <scope>SUBCELLULAR LOCATION</scope>
    <scope>INTERACTION WITH PTK6</scope>
</reference>
<reference evidence="30" key="11">
    <citation type="journal article" date="2001" name="Cell. Immunol.">
        <title>Human leptin signaling in human peripheral blood mononuclear cells: activation of the JAK-STAT pathway.</title>
        <authorList>
            <person name="Sanchez-Margalet V."/>
            <person name="Martin-Romero C."/>
        </authorList>
    </citation>
    <scope>FUNCTION</scope>
    <scope>PHOSPHORYLATION</scope>
    <scope>INTERACTION WITH STAT3</scope>
</reference>
<reference evidence="30" key="12">
    <citation type="journal article" date="2003" name="Mol. Biol. Cell">
        <title>Sam68 RNA binding protein is an in vivo substrate for protein arginine N-methyltransferase 1.</title>
        <authorList>
            <person name="Cote J."/>
            <person name="Boisvert F.-M."/>
            <person name="Boulanger M.-C."/>
            <person name="Bedford M.T."/>
            <person name="Richard S."/>
        </authorList>
    </citation>
    <scope>METHYLATION AT ARG-45; ARG-52; ARG-304; ARG-310; ARG-315; ARG-320 AND ARG-325</scope>
    <scope>SUBCELLULAR LOCATION</scope>
</reference>
<reference key="13">
    <citation type="journal article" date="2004" name="Nat. Methods">
        <title>Identifying and quantifying in vivo methylation sites by heavy methyl SILAC.</title>
        <authorList>
            <person name="Ong S.E."/>
            <person name="Mittler G."/>
            <person name="Mann M."/>
        </authorList>
    </citation>
    <scope>METHYLATION [LARGE SCALE ANALYSIS] AT ARG-340</scope>
    <scope>IDENTIFICATION BY MASS SPECTROMETRY [LARGE SCALE ANALYSIS]</scope>
    <source>
        <tissue>Cervix carcinoma</tissue>
    </source>
</reference>
<reference evidence="30" key="14">
    <citation type="journal article" date="2004" name="Oncogene">
        <title>The RNA binding protein Sam68 is acetylated in tumor cell lines, and its acetylation correlates with enhanced RNA binding activity.</title>
        <authorList>
            <person name="Babic I."/>
            <person name="Jakymiw A."/>
            <person name="Fujita D.J."/>
        </authorList>
    </citation>
    <scope>ACETYLATION</scope>
    <scope>INTERACTION WITH RNA</scope>
</reference>
<reference key="15">
    <citation type="journal article" date="2005" name="J. Biol. Chem.">
        <title>Tyrosine phosphorylation of sam68 by breast tumor kinase regulates intranuclear localization and cell cycle progression.</title>
        <authorList>
            <person name="Lukong K.E."/>
            <person name="Larocque D."/>
            <person name="Tyner A.L."/>
            <person name="Richard S."/>
        </authorList>
    </citation>
    <scope>PHOSPHORYLATION AT TYR-435; TYR-440 AND TYR-443</scope>
    <scope>SUBCELLULAR LOCATION</scope>
    <scope>MUTAGENESIS OF TYR-435; TYR-440 AND TYR-443</scope>
</reference>
<reference key="16">
    <citation type="journal article" date="2006" name="Cell">
        <title>Global, in vivo, and site-specific phosphorylation dynamics in signaling networks.</title>
        <authorList>
            <person name="Olsen J.V."/>
            <person name="Blagoev B."/>
            <person name="Gnad F."/>
            <person name="Macek B."/>
            <person name="Kumar C."/>
            <person name="Mortensen P."/>
            <person name="Mann M."/>
        </authorList>
    </citation>
    <scope>IDENTIFICATION BY MASS SPECTROMETRY [LARGE SCALE ANALYSIS]</scope>
    <source>
        <tissue>Cervix carcinoma</tissue>
    </source>
</reference>
<reference key="17">
    <citation type="journal article" date="2007" name="Biochim. Biophys. Acta">
        <title>The nuclear PP1 interacting protein ZAP3 (ZAP) is a putative nucleoside kinase that complexes with SAM68, CIA, NF110/45, and HNRNP-G.</title>
        <authorList>
            <person name="Ulke-Lemee A."/>
            <person name="Trinkle-Mulcahy L."/>
            <person name="Chaulk S."/>
            <person name="Bernstein N.K."/>
            <person name="Morrice N."/>
            <person name="Glover M."/>
            <person name="Lamond A.I."/>
            <person name="Moorhead G.B.G."/>
        </authorList>
    </citation>
    <scope>IDENTIFICATION IN A COMPLEX WITH ILF2; ILF3; YLPM1; RBMX; NCOA5 AND PPP1CA</scope>
</reference>
<reference key="18">
    <citation type="journal article" date="2007" name="J. Cell Biol.">
        <title>The RNA-binding protein Sam68 modulates the alternative splicing of Bcl-x.</title>
        <authorList>
            <person name="Paronetto M.P."/>
            <person name="Achsel T."/>
            <person name="Massiello A."/>
            <person name="Chalfant C.E."/>
            <person name="Sette C."/>
        </authorList>
    </citation>
    <scope>FUNCTION</scope>
    <scope>INTERACTION WITH HNRNPA1</scope>
    <scope>PHOSPHORYLATION</scope>
    <scope>MUTAGENESIS OF VAL-229</scope>
</reference>
<reference key="19">
    <citation type="journal article" date="2007" name="J. Proteome Res.">
        <title>Improved titanium dioxide enrichment of phosphopeptides from HeLa cells and high confident phosphopeptide identification by cross-validation of MS/MS and MS/MS/MS spectra.</title>
        <authorList>
            <person name="Yu L.R."/>
            <person name="Zhu Z."/>
            <person name="Chan K.C."/>
            <person name="Issaq H.J."/>
            <person name="Dimitrov D.S."/>
            <person name="Veenstra T.D."/>
        </authorList>
    </citation>
    <scope>IDENTIFICATION BY MASS SPECTROMETRY [LARGE SCALE ANALYSIS]</scope>
    <source>
        <tissue>Cervix carcinoma</tissue>
    </source>
</reference>
<reference key="20">
    <citation type="journal article" date="2008" name="J. Proteome Res.">
        <title>Combining protein-based IMAC, peptide-based IMAC, and MudPIT for efficient phosphoproteomic analysis.</title>
        <authorList>
            <person name="Cantin G.T."/>
            <person name="Yi W."/>
            <person name="Lu B."/>
            <person name="Park S.K."/>
            <person name="Xu T."/>
            <person name="Lee J.-D."/>
            <person name="Yates J.R. III"/>
        </authorList>
    </citation>
    <scope>IDENTIFICATION BY MASS SPECTROMETRY [LARGE SCALE ANALYSIS]</scope>
    <source>
        <tissue>Cervix carcinoma</tissue>
    </source>
</reference>
<reference key="21">
    <citation type="journal article" date="2008" name="Mol. Cell">
        <title>Kinase-selective enrichment enables quantitative phosphoproteomics of the kinome across the cell cycle.</title>
        <authorList>
            <person name="Daub H."/>
            <person name="Olsen J.V."/>
            <person name="Bairlein M."/>
            <person name="Gnad F."/>
            <person name="Oppermann F.S."/>
            <person name="Korner R."/>
            <person name="Greff Z."/>
            <person name="Keri G."/>
            <person name="Stemmann O."/>
            <person name="Mann M."/>
        </authorList>
    </citation>
    <scope>PHOSPHORYLATION [LARGE SCALE ANALYSIS] AT SER-58</scope>
    <scope>IDENTIFICATION BY MASS SPECTROMETRY [LARGE SCALE ANALYSIS]</scope>
    <source>
        <tissue>Cervix carcinoma</tissue>
    </source>
</reference>
<reference key="22">
    <citation type="journal article" date="2008" name="Proc. Natl. Acad. Sci. U.S.A.">
        <title>A quantitative atlas of mitotic phosphorylation.</title>
        <authorList>
            <person name="Dephoure N."/>
            <person name="Zhou C."/>
            <person name="Villen J."/>
            <person name="Beausoleil S.A."/>
            <person name="Bakalarski C.E."/>
            <person name="Elledge S.J."/>
            <person name="Gygi S.P."/>
        </authorList>
    </citation>
    <scope>PHOSPHORYLATION [LARGE SCALE ANALYSIS] AT SER-20 AND SER-29</scope>
    <scope>IDENTIFICATION BY MASS SPECTROMETRY [LARGE SCALE ANALYSIS]</scope>
    <source>
        <tissue>Cervix carcinoma</tissue>
    </source>
</reference>
<reference key="23">
    <citation type="journal article" date="2009" name="Sci. Signal.">
        <title>Quantitative phosphoproteomic analysis of T cell receptor signaling reveals system-wide modulation of protein-protein interactions.</title>
        <authorList>
            <person name="Mayya V."/>
            <person name="Lundgren D.H."/>
            <person name="Hwang S.-I."/>
            <person name="Rezaul K."/>
            <person name="Wu L."/>
            <person name="Eng J.K."/>
            <person name="Rodionov V."/>
            <person name="Han D.K."/>
        </authorList>
    </citation>
    <scope>IDENTIFICATION BY MASS SPECTROMETRY [LARGE SCALE ANALYSIS]</scope>
    <source>
        <tissue>Leukemic T-cell</tissue>
    </source>
</reference>
<reference key="24">
    <citation type="journal article" date="2009" name="Science">
        <title>Lysine acetylation targets protein complexes and co-regulates major cellular functions.</title>
        <authorList>
            <person name="Choudhary C."/>
            <person name="Kumar C."/>
            <person name="Gnad F."/>
            <person name="Nielsen M.L."/>
            <person name="Rehman M."/>
            <person name="Walther T.C."/>
            <person name="Olsen J.V."/>
            <person name="Mann M."/>
        </authorList>
    </citation>
    <scope>ACETYLATION [LARGE SCALE ANALYSIS] AT LYS-175</scope>
    <scope>IDENTIFICATION BY MASS SPECTROMETRY [LARGE SCALE ANALYSIS]</scope>
</reference>
<reference key="25">
    <citation type="journal article" date="2010" name="EMBO J.">
        <title>The splicing regulator Sam68 binds to a novel exonic splicing silencer and functions in SMN2 alternative splicing in spinal muscular atrophy.</title>
        <authorList>
            <person name="Pedrotti S."/>
            <person name="Bielli P."/>
            <person name="Paronetto M.P."/>
            <person name="Ciccosanti F."/>
            <person name="Fimia G.M."/>
            <person name="Stamm S."/>
            <person name="Manley J.L."/>
            <person name="Sette C."/>
        </authorList>
    </citation>
    <scope>FUNCTION</scope>
</reference>
<reference key="26">
    <citation type="journal article" date="2010" name="Sci. Signal.">
        <title>Quantitative phosphoproteomics reveals widespread full phosphorylation site occupancy during mitosis.</title>
        <authorList>
            <person name="Olsen J.V."/>
            <person name="Vermeulen M."/>
            <person name="Santamaria A."/>
            <person name="Kumar C."/>
            <person name="Miller M.L."/>
            <person name="Jensen L.J."/>
            <person name="Gnad F."/>
            <person name="Cox J."/>
            <person name="Jensen T.S."/>
            <person name="Nigg E.A."/>
            <person name="Brunak S."/>
            <person name="Mann M."/>
        </authorList>
    </citation>
    <scope>IDENTIFICATION BY MASS SPECTROMETRY [LARGE SCALE ANALYSIS]</scope>
    <source>
        <tissue>Cervix carcinoma</tissue>
    </source>
</reference>
<reference key="27">
    <citation type="journal article" date="2011" name="BMC Syst. Biol.">
        <title>Initial characterization of the human central proteome.</title>
        <authorList>
            <person name="Burkard T.R."/>
            <person name="Planyavsky M."/>
            <person name="Kaupe I."/>
            <person name="Breitwieser F.P."/>
            <person name="Buerckstuemmer T."/>
            <person name="Bennett K.L."/>
            <person name="Superti-Furga G."/>
            <person name="Colinge J."/>
        </authorList>
    </citation>
    <scope>IDENTIFICATION BY MASS SPECTROMETRY [LARGE SCALE ANALYSIS]</scope>
</reference>
<reference key="28">
    <citation type="journal article" date="2011" name="RNA">
        <title>The Tpr protein regulates export of mRNAs with retained introns that traffic through the Nxf1 pathway.</title>
        <authorList>
            <person name="Coyle J.H."/>
            <person name="Bor Y.C."/>
            <person name="Rekosh D."/>
            <person name="Hammarskjold M.L."/>
        </authorList>
    </citation>
    <scope>FUNCTION</scope>
</reference>
<reference key="29">
    <citation type="journal article" date="2011" name="Sci. Signal.">
        <title>System-wide temporal characterization of the proteome and phosphoproteome of human embryonic stem cell differentiation.</title>
        <authorList>
            <person name="Rigbolt K.T."/>
            <person name="Prokhorova T.A."/>
            <person name="Akimov V."/>
            <person name="Henningsen J."/>
            <person name="Johansen P.T."/>
            <person name="Kratchmarova I."/>
            <person name="Kassem M."/>
            <person name="Mann M."/>
            <person name="Olsen J.V."/>
            <person name="Blagoev B."/>
        </authorList>
    </citation>
    <scope>IDENTIFICATION BY MASS SPECTROMETRY [LARGE SCALE ANALYSIS]</scope>
</reference>
<reference key="30">
    <citation type="journal article" date="2012" name="PLoS ONE">
        <title>Localization of nucleoporin Tpr to the nuclear pore complex is essential for Tpr mediated regulation of the export of unspliced RNA.</title>
        <authorList>
            <person name="Rajanala K."/>
            <person name="Nandicoori V.K."/>
        </authorList>
    </citation>
    <scope>LACK OF FUNCTION IN UNSPLICED RNA EXPORT</scope>
    <scope>LACK OF INTERACTION WITH TPR</scope>
</reference>
<reference key="31">
    <citation type="journal article" date="2013" name="J. Proteome Res.">
        <title>Toward a comprehensive characterization of a human cancer cell phosphoproteome.</title>
        <authorList>
            <person name="Zhou H."/>
            <person name="Di Palma S."/>
            <person name="Preisinger C."/>
            <person name="Peng M."/>
            <person name="Polat A.N."/>
            <person name="Heck A.J."/>
            <person name="Mohammed S."/>
        </authorList>
    </citation>
    <scope>PHOSPHORYLATION [LARGE SCALE ANALYSIS] AT SER-18; SER-20; SER-29; THR-33; SER-150 AND THR-183</scope>
    <scope>IDENTIFICATION BY MASS SPECTROMETRY [LARGE SCALE ANALYSIS]</scope>
    <source>
        <tissue>Cervix carcinoma</tissue>
        <tissue>Erythroleukemia</tissue>
    </source>
</reference>
<reference key="32">
    <citation type="journal article" date="2014" name="EMBO Rep.">
        <title>The transcription factor FBI-1 inhibits SAM68-mediated BCL-X alternative splicing and apoptosis.</title>
        <authorList>
            <person name="Bielli P."/>
            <person name="Busa R."/>
            <person name="Di Stasi S.M."/>
            <person name="Munoz M.J."/>
            <person name="Botti F."/>
            <person name="Kornblihtt A.R."/>
            <person name="Sette C."/>
        </authorList>
    </citation>
    <scope>INTERACTION WITH ZBTB7A</scope>
    <scope>REGION</scope>
</reference>
<reference key="33">
    <citation type="journal article" date="2014" name="J. Proteomics">
        <title>An enzyme assisted RP-RPLC approach for in-depth analysis of human liver phosphoproteome.</title>
        <authorList>
            <person name="Bian Y."/>
            <person name="Song C."/>
            <person name="Cheng K."/>
            <person name="Dong M."/>
            <person name="Wang F."/>
            <person name="Huang J."/>
            <person name="Sun D."/>
            <person name="Wang L."/>
            <person name="Ye M."/>
            <person name="Zou H."/>
        </authorList>
    </citation>
    <scope>PHOSPHORYLATION [LARGE SCALE ANALYSIS] AT SER-18; SER-58 AND SER-390</scope>
    <scope>IDENTIFICATION BY MASS SPECTROMETRY [LARGE SCALE ANALYSIS]</scope>
    <source>
        <tissue>Liver</tissue>
    </source>
</reference>
<reference key="34">
    <citation type="journal article" date="2014" name="Mol. Cell. Proteomics">
        <title>Immunoaffinity enrichment and mass spectrometry analysis of protein methylation.</title>
        <authorList>
            <person name="Guo A."/>
            <person name="Gu H."/>
            <person name="Zhou J."/>
            <person name="Mulhern D."/>
            <person name="Wang Y."/>
            <person name="Lee K.A."/>
            <person name="Yang V."/>
            <person name="Aguiar M."/>
            <person name="Kornhauser J."/>
            <person name="Jia X."/>
            <person name="Ren J."/>
            <person name="Beausoleil S.A."/>
            <person name="Silva J.C."/>
            <person name="Vemulapalli V."/>
            <person name="Bedford M.T."/>
            <person name="Comb M.J."/>
        </authorList>
    </citation>
    <scope>METHYLATION [LARGE SCALE ANALYSIS] AT ARG-282; ARG-284; ARG-331 AND ARG-340</scope>
    <scope>IDENTIFICATION BY MASS SPECTROMETRY [LARGE SCALE ANALYSIS]</scope>
    <source>
        <tissue>Colon carcinoma</tissue>
    </source>
</reference>
<reference key="35">
    <citation type="journal article" date="2014" name="Nat. Struct. Mol. Biol.">
        <title>Uncovering global SUMOylation signaling networks in a site-specific manner.</title>
        <authorList>
            <person name="Hendriks I.A."/>
            <person name="D'Souza R.C."/>
            <person name="Yang B."/>
            <person name="Verlaan-de Vries M."/>
            <person name="Mann M."/>
            <person name="Vertegaal A.C."/>
        </authorList>
    </citation>
    <scope>SUMOYLATION [LARGE SCALE ANALYSIS] AT LYS-102</scope>
    <scope>IDENTIFICATION BY MASS SPECTROMETRY [LARGE SCALE ANALYSIS]</scope>
</reference>
<reference key="36">
    <citation type="journal article" date="2014" name="Proc. Natl. Acad. Sci. U.S.A.">
        <title>Mapping of SUMO sites and analysis of SUMOylation changes induced by external stimuli.</title>
        <authorList>
            <person name="Impens F."/>
            <person name="Radoshevich L."/>
            <person name="Cossart P."/>
            <person name="Ribet D."/>
        </authorList>
    </citation>
    <scope>SUMOYLATION [LARGE SCALE ANALYSIS] AT LYS-102</scope>
    <scope>IDENTIFICATION BY MASS SPECTROMETRY [LARGE SCALE ANALYSIS]</scope>
</reference>
<reference key="37">
    <citation type="journal article" date="2015" name="Cell Rep.">
        <title>SUMO-2 orchestrates chromatin modifiers in response to DNA damage.</title>
        <authorList>
            <person name="Hendriks I.A."/>
            <person name="Treffers L.W."/>
            <person name="Verlaan-de Vries M."/>
            <person name="Olsen J.V."/>
            <person name="Vertegaal A.C."/>
        </authorList>
    </citation>
    <scope>SUMOYLATION [LARGE SCALE ANALYSIS] AT LYS-102</scope>
    <scope>IDENTIFICATION BY MASS SPECTROMETRY [LARGE SCALE ANALYSIS]</scope>
</reference>
<reference key="38">
    <citation type="journal article" date="2015" name="Mol. Cell. Proteomics">
        <title>System-wide analysis of SUMOylation dynamics in response to replication stress reveals novel small ubiquitin-like modified target proteins and acceptor lysines relevant for genome stability.</title>
        <authorList>
            <person name="Xiao Z."/>
            <person name="Chang J.G."/>
            <person name="Hendriks I.A."/>
            <person name="Sigurdsson J.O."/>
            <person name="Olsen J.V."/>
            <person name="Vertegaal A.C."/>
        </authorList>
    </citation>
    <scope>SUMOYLATION [LARGE SCALE ANALYSIS] AT LYS-102</scope>
    <scope>IDENTIFICATION BY MASS SPECTROMETRY [LARGE SCALE ANALYSIS]</scope>
</reference>
<reference key="39">
    <citation type="journal article" date="2015" name="Proc. Natl. Acad. Sci. U.S.A.">
        <title>Nuclear matrix-associated protein SMAR1 regulates alternative splicing via HDAC6-mediated deacetylation of Sam68.</title>
        <authorList>
            <person name="Nakka K.K."/>
            <person name="Chaudhary N."/>
            <person name="Joshi S."/>
            <person name="Bhat J."/>
            <person name="Singh K."/>
            <person name="Chatterjee S."/>
            <person name="Malhotra R."/>
            <person name="De A."/>
            <person name="Santra M.K."/>
            <person name="Dilworth F.J."/>
            <person name="Chattopadhyay S."/>
        </authorList>
    </citation>
    <scope>FUNCTION</scope>
    <scope>INTERACTION WITH BANP AND HDAC6</scope>
    <scope>SUBCELLULAR LOCATION</scope>
    <scope>ACETYLATION</scope>
    <scope>DEACETYLATION BY HDAC6</scope>
</reference>
<reference key="40">
    <citation type="journal article" date="2015" name="Proteomics">
        <title>N-terminome analysis of the human mitochondrial proteome.</title>
        <authorList>
            <person name="Vaca Jacome A.S."/>
            <person name="Rabilloud T."/>
            <person name="Schaeffer-Reiss C."/>
            <person name="Rompais M."/>
            <person name="Ayoub D."/>
            <person name="Lane L."/>
            <person name="Bairoch A."/>
            <person name="Van Dorsselaer A."/>
            <person name="Carapito C."/>
        </authorList>
    </citation>
    <scope>IDENTIFICATION BY MASS SPECTROMETRY [LARGE SCALE ANALYSIS]</scope>
</reference>
<reference key="41">
    <citation type="journal article" date="2016" name="Nat. Commun.">
        <title>Structural basis of RNA recognition and dimerization by the STAR proteins T-STAR and Sam68.</title>
        <authorList>
            <person name="Feracci M."/>
            <person name="Foot J.N."/>
            <person name="Grellscheid S.N."/>
            <person name="Danilenko M."/>
            <person name="Stehle R."/>
            <person name="Gonchar O."/>
            <person name="Kang H.S."/>
            <person name="Dalgliesh C."/>
            <person name="Meyer N.H."/>
            <person name="Liu Y."/>
            <person name="Lahat A."/>
            <person name="Sattler M."/>
            <person name="Eperon I.C."/>
            <person name="Elliott D.J."/>
            <person name="Dominguez C."/>
        </authorList>
    </citation>
    <scope>RNA-BINDING</scope>
    <scope>FUNCTION</scope>
    <scope>SELF-ASSOCIATION</scope>
    <scope>MUTAGENESIS OF TYR-241</scope>
</reference>
<reference key="42">
    <citation type="journal article" date="2017" name="Nat. Struct. Mol. Biol.">
        <title>Site-specific mapping of the human SUMO proteome reveals co-modification with phosphorylation.</title>
        <authorList>
            <person name="Hendriks I.A."/>
            <person name="Lyon D."/>
            <person name="Young C."/>
            <person name="Jensen L.J."/>
            <person name="Vertegaal A.C."/>
            <person name="Nielsen M.L."/>
        </authorList>
    </citation>
    <scope>SUMOYLATION [LARGE SCALE ANALYSIS] AT LYS-96; LYS-102; LYS-139; LYS-175 AND LYS-432</scope>
    <scope>IDENTIFICATION BY MASS SPECTROMETRY [LARGE SCALE ANALYSIS]</scope>
</reference>
<reference key="43">
    <citation type="journal article" date="2018" name="Mol. Cell. Proteomics">
        <title>Phosphoproteomics analysis identifies novel candidate substrates of the non-receptor tyrosine kinase, SRMS.</title>
        <authorList>
            <person name="Goel R.K."/>
            <person name="Paczkowska M."/>
            <person name="Reimand J."/>
            <person name="Napper S."/>
            <person name="Lukong K.E."/>
        </authorList>
    </citation>
    <scope>INTERACTION WITH SRMS</scope>
    <scope>SUBCELLULAR LOCATION</scope>
    <scope>PHOSPHORYLATION</scope>
</reference>
<reference key="44">
    <citation type="journal article" date="2010" name="J. Biol. Chem.">
        <title>Structural basis for homodimerization of the Src-associated during mitosis, 68-kDa protein (Sam68) Qua1 domain.</title>
        <authorList>
            <person name="Meyer N.H."/>
            <person name="Tripsianes K."/>
            <person name="Vincendeau M."/>
            <person name="Madl T."/>
            <person name="Kateb F."/>
            <person name="Brack-Werner R."/>
            <person name="Sattler M."/>
        </authorList>
    </citation>
    <scope>STRUCTURE BY NMR OF 97-135</scope>
    <scope>FUNCTION</scope>
    <scope>SUBUNIT</scope>
    <scope>MUTAGENESIS OF TYR-103; GLU-110 AND PHE-118</scope>
</reference>
<reference key="45">
    <citation type="journal article" date="2011" name="Structure">
        <title>Crystal structures of the armadillo repeat domain of adenomatous polyposis coli and its complex with the tyrosine-rich domain of Sam68.</title>
        <authorList>
            <person name="Morishita E.C."/>
            <person name="Murayama K."/>
            <person name="Kato-Murayama M."/>
            <person name="Ishizuka-Katsura Y."/>
            <person name="Tomabechi Y."/>
            <person name="Hayashi T."/>
            <person name="Terada T."/>
            <person name="Handa N."/>
            <person name="Shirouzu M."/>
            <person name="Akiyama T."/>
            <person name="Yokoyama S."/>
        </authorList>
    </citation>
    <scope>X-RAY CRYSTALLOGRAPHY (2.4 ANGSTROMS) OF 365-419 IN COMPLEX WITH APC</scope>
    <scope>PHOSPHORYLATION AT TYR-387</scope>
    <scope>MUTAGENESIS OF GLU-381; TYR-383 AND GLU-384</scope>
</reference>
<organism>
    <name type="scientific">Homo sapiens</name>
    <name type="common">Human</name>
    <dbReference type="NCBI Taxonomy" id="9606"/>
    <lineage>
        <taxon>Eukaryota</taxon>
        <taxon>Metazoa</taxon>
        <taxon>Chordata</taxon>
        <taxon>Craniata</taxon>
        <taxon>Vertebrata</taxon>
        <taxon>Euteleostomi</taxon>
        <taxon>Mammalia</taxon>
        <taxon>Eutheria</taxon>
        <taxon>Euarchontoglires</taxon>
        <taxon>Primates</taxon>
        <taxon>Haplorrhini</taxon>
        <taxon>Catarrhini</taxon>
        <taxon>Hominidae</taxon>
        <taxon>Homo</taxon>
    </lineage>
</organism>
<accession>Q07666</accession>
<accession>D3DPP3</accession>
<accession>Q6PJX7</accession>
<accession>Q8NB97</accession>
<accession>Q99760</accession>
<sequence>MQRRDDPAARMSRSSGRSGSMDPSGAHPSVRQTPSRQPPLPHRSRGGGGGSRGGARASPATQPPPLLPPSATGPDATVGGPAPTPLLPPSATASVKMEPENKYLPELMAEKDSLDPSFTHAMQLLTAEIEKIQKGDSKKDDEENYLDLFSHKNMKLKERVLIPVKQYPKFNFVGKILGPQGNTIKRLQEETGAKISVLGKGSMRDKAKEEELRKGGDPKYAHLNMDLHVFIEVFGPPCEAYALMAHAMEEVKKFLVPDMMDDICQEQFLELSYLNGVPEPSRGRGVPVRGRGAAPPPPPVPRGRGVGPPRGALVRGTPVRGAITRGATVTRGVPPPPTVRGAPAPRARTAGIQRIPLPPPPAPETYEEYGYDDTYAEQSYEGYEGYYSQSQGDSEYYDYGHGEVQDSYEAYGQDDWNGTRPSLKAPPARPVKGAYREHPYGRY</sequence>
<protein>
    <recommendedName>
        <fullName>KH domain-containing, RNA-binding, signal transduction-associated protein 1</fullName>
    </recommendedName>
    <alternativeName>
        <fullName>GAP-associated tyrosine phosphoprotein p62</fullName>
    </alternativeName>
    <alternativeName>
        <fullName>Src-associated in mitosis 68 kDa protein</fullName>
        <shortName>Sam68</shortName>
    </alternativeName>
    <alternativeName>
        <fullName>p21 Ras GTPase-activating protein-associated p62</fullName>
    </alternativeName>
    <alternativeName>
        <fullName>p68</fullName>
    </alternativeName>
</protein>
<name>KHDR1_HUMAN</name>
<gene>
    <name evidence="39" type="primary">KHDRBS1</name>
    <name evidence="27" type="synonym">SAM68</name>
</gene>
<comment type="function">
    <text evidence="2 12 14 16 17 19 21 22">Recruited and tyrosine phosphorylated by several receptor systems, for example the T-cell, leptin and insulin receptors. Once phosphorylated, functions as an adapter protein in signal transduction cascades by binding to SH2 and SH3 domain-containing proteins. Role in G2-M progression in the cell cycle. Represses CBP-dependent transcriptional activation apparently by competing with other nuclear factors for binding to CBP. Also acts as a putative regulator of mRNA stability and/or translation rates and mediates mRNA nuclear export. Positively regulates the association of constitutive transport element (CTE)-containing mRNA with large polyribosomes and translation initiation. According to some authors, is not involved in the nucleocytoplasmic export of unspliced (CTE)-containing RNA species according to (PubMed:22253824). RNA-binding protein that plays a role in the regulation of alternative splicing and influences mRNA splice site selection and exon inclusion. Binds to RNA containing 5'-[AU]UAA-3' as a bipartite motif spaced by more than 15 nucleotides. Binds poly(A). Can regulate CD44 alternative splicing in a Ras pathway-dependent manner (PubMed:26080397). In cooperation with HNRNPA1 modulates alternative splicing of BCL2L1 by promoting splicing toward isoform Bcl-X(S), and of SMN1 (PubMed:17371836, PubMed:20186123). Can regulate alternative splicing of NRXN1 and NRXN3 in the laminin G-like domain 6 containing the evolutionary conserved neurexin alternative spliced segment 4 (AS4) involved in neurexin selective targeting to postsynaptic partners. In a neuronal activity-dependent manner cooperates synergistically with KHDRBS2/SLIM-1 in regulation of NRXN1 exon skipping at AS4. The cooperation with KHDRBS2/SLIM-1 is antagonistic for regulation of NXRN3 alternative splicing at AS4 (By similarity).</text>
</comment>
<comment type="function">
    <text evidence="24">Isoform 3, which is expressed in growth-arrested cells only, inhibits S phase.</text>
</comment>
<comment type="subunit">
    <text evidence="2 3 7 8 9 11 14 15 18 20 21 23 25">Self-associates to form homooligomers when bound to RNA, oligomerization appears to be limited when binding to proteins; dimerization increases RNA affinity (PubMed:20610388, PubMed:26758068). Forms a trimeric complex in the nucleus consisting of BANP, HDAC6 and KHDRBS1/SAM68; HDAC6 keeps KHDRBS1 in a deacetylated state which inhibits the inclusion of CD44 alternate exons (PubMed:26080397). The complex is disrupted by MAPK1/MAPK3-mediated phosphorylation of BANP which results in BANP export to the cytoplasm (PubMed:26080397). This facilitates acetylation of KHDRBS1 and CD44 variant exon inclusion (PubMed:26080397). Interacts with KHDRBS3/SLIM-2 (PubMed:10332027). Interacts with KHDRBS2/SLIM-1; heterooligomer formation of KHDRBS family proteins may modulate RNA substrate specificity (By similarity). Interacts with RASA1, LCK, FYN, PTPN6, PLCG1, GRB2, CBL, JAK3, PIK3R, STAT3, APC, HNRNPA1 (PubMed:10332027, PubMed:11585385, PubMed:1374686, PubMed:17371836, PubMed:22000517, PubMed:9045636). Interacts with PTK6 (via SH3 and SH2 domains) (PubMed:10913193). Forms a complex with ILF2, ILF3, YLPM1, RBMX, NCOA5 and PPP1CA (PubMed:17890166). Does not interact with TPR (PubMed:22253824). Interacts with PRMT1 (By similarity). Binds WBP4/FBP21 (via WW domains), FNBP4/FBP30 (via WW domains). Interacts (via Arg/Gly-rich-flanked Pro-rich regions) with FYN (via the SH3 domain) (By similarity). Interacts with the non-receptor tyrosine kinase SRMS; the interaction leads to phosphorylation of KHDRBS1 (PubMed:29496907). Interacts with ZBTB7A; negatively regulates KHDRBS1 splicing activity toward BCL2L1 (PubMed:24514149).</text>
</comment>
<comment type="interaction">
    <interactant intactId="EBI-1364">
        <id>Q07666</id>
    </interactant>
    <interactant intactId="EBI-727707">
        <id>P25054</id>
        <label>APC</label>
    </interactant>
    <organismsDiffer>false</organismsDiffer>
    <experiments>4</experiments>
</comment>
<comment type="interaction">
    <interactant intactId="EBI-1364">
        <id>Q07666</id>
    </interactant>
    <interactant intactId="EBI-515315">
        <id>P06241</id>
        <label>FYN</label>
    </interactant>
    <organismsDiffer>false</organismsDiffer>
    <experiments>7</experiments>
</comment>
<comment type="interaction">
    <interactant intactId="EBI-1364">
        <id>Q07666</id>
    </interactant>
    <interactant intactId="EBI-401755">
        <id>P62993</id>
        <label>GRB2</label>
    </interactant>
    <organismsDiffer>false</organismsDiffer>
    <experiments>8</experiments>
</comment>
<comment type="interaction">
    <interactant intactId="EBI-1364">
        <id>Q07666</id>
    </interactant>
    <interactant intactId="EBI-346340">
        <id>P08631</id>
        <label>HCK</label>
    </interactant>
    <organismsDiffer>false</organismsDiffer>
    <experiments>4</experiments>
</comment>
<comment type="interaction">
    <interactant intactId="EBI-1364">
        <id>Q07666</id>
    </interactant>
    <interactant intactId="EBI-352662">
        <id>P09651</id>
        <label>HNRNPA1</label>
    </interactant>
    <organismsDiffer>false</organismsDiffer>
    <experiments>10</experiments>
</comment>
<comment type="interaction">
    <interactant intactId="EBI-1364">
        <id>Q07666</id>
    </interactant>
    <interactant intactId="EBI-304185">
        <id>P61978</id>
        <label>HNRNPK</label>
    </interactant>
    <organismsDiffer>false</organismsDiffer>
    <experiments>3</experiments>
</comment>
<comment type="interaction">
    <interactant intactId="EBI-1364">
        <id>Q07666</id>
    </interactant>
    <interactant intactId="EBI-518246">
        <id>P52333</id>
        <label>JAK3</label>
    </interactant>
    <organismsDiffer>false</organismsDiffer>
    <experiments>2</experiments>
</comment>
<comment type="interaction">
    <interactant intactId="EBI-1364">
        <id>Q07666</id>
    </interactant>
    <interactant intactId="EBI-1364">
        <id>Q07666</id>
        <label>KHDRBS1</label>
    </interactant>
    <organismsDiffer>false</organismsDiffer>
    <experiments>4</experiments>
</comment>
<comment type="interaction">
    <interactant intactId="EBI-1364">
        <id>Q07666</id>
    </interactant>
    <interactant intactId="EBI-742808">
        <id>Q5VWX1</id>
        <label>KHDRBS2</label>
    </interactant>
    <organismsDiffer>false</organismsDiffer>
    <experiments>3</experiments>
</comment>
<comment type="interaction">
    <interactant intactId="EBI-1364">
        <id>Q07666</id>
    </interactant>
    <interactant intactId="EBI-722504">
        <id>O75525</id>
        <label>KHDRBS3</label>
    </interactant>
    <organismsDiffer>false</organismsDiffer>
    <experiments>3</experiments>
</comment>
<comment type="interaction">
    <interactant intactId="EBI-1364">
        <id>Q07666</id>
    </interactant>
    <interactant intactId="EBI-1348">
        <id>P06239</id>
        <label>LCK</label>
    </interactant>
    <organismsDiffer>false</organismsDiffer>
    <experiments>5</experiments>
</comment>
<comment type="interaction">
    <interactant intactId="EBI-1364">
        <id>Q07666</id>
    </interactant>
    <interactant intactId="EBI-79387">
        <id>P19174</id>
        <label>PLCG1</label>
    </interactant>
    <organismsDiffer>false</organismsDiffer>
    <experiments>3</experiments>
</comment>
<comment type="interaction">
    <interactant intactId="EBI-1364">
        <id>Q07666</id>
    </interactant>
    <interactant intactId="EBI-743526">
        <id>P38159</id>
        <label>RBMX</label>
    </interactant>
    <organismsDiffer>false</organismsDiffer>
    <experiments>3</experiments>
</comment>
<comment type="interaction">
    <interactant intactId="EBI-1364">
        <id>Q07666</id>
    </interactant>
    <interactant intactId="EBI-679562">
        <id>P51531</id>
        <label>SMARCA2</label>
    </interactant>
    <organismsDiffer>false</organismsDiffer>
    <experiments>2</experiments>
</comment>
<comment type="interaction">
    <interactant intactId="EBI-1364">
        <id>Q07666</id>
    </interactant>
    <interactant intactId="EBI-621482">
        <id>P12931</id>
        <label>SRC</label>
    </interactant>
    <organismsDiffer>false</organismsDiffer>
    <experiments>3</experiments>
</comment>
<comment type="interaction">
    <interactant intactId="EBI-1364">
        <id>Q07666</id>
    </interactant>
    <interactant intactId="EBI-518675">
        <id>P40763</id>
        <label>STAT3</label>
    </interactant>
    <organismsDiffer>false</organismsDiffer>
    <experiments>2</experiments>
</comment>
<comment type="interaction">
    <interactant intactId="EBI-1364">
        <id>Q07666</id>
    </interactant>
    <interactant intactId="EBI-625518">
        <id>P15498</id>
        <label>VAV1</label>
    </interactant>
    <organismsDiffer>false</organismsDiffer>
    <experiments>3</experiments>
</comment>
<comment type="interaction">
    <interactant intactId="EBI-1364">
        <id>Q07666</id>
    </interactant>
    <interactant intactId="EBI-2795384">
        <id>O95365</id>
        <label>ZBTB7A</label>
    </interactant>
    <organismsDiffer>false</organismsDiffer>
    <experiments>9</experiments>
</comment>
<comment type="interaction">
    <interactant intactId="EBI-1364">
        <id>Q07666</id>
    </interactant>
    <interactant intactId="EBI-1401">
        <id>P06240</id>
        <label>Lck</label>
    </interactant>
    <organismsDiffer>true</organismsDiffer>
    <experiments>2</experiments>
</comment>
<comment type="interaction">
    <interactant intactId="EBI-1364">
        <id>Q07666</id>
    </interactant>
    <interactant intactId="EBI-520244">
        <id>P23727</id>
        <label>PIK3R1</label>
    </interactant>
    <organismsDiffer>true</organismsDiffer>
    <experiments>2</experiments>
</comment>
<comment type="subcellular location">
    <subcellularLocation>
        <location evidence="11 21 23">Nucleus</location>
    </subcellularLocation>
    <subcellularLocation>
        <location evidence="23">Cytoplasm</location>
    </subcellularLocation>
    <subcellularLocation>
        <location evidence="11">Membrane</location>
    </subcellularLocation>
    <text evidence="23">Predominantly located in the nucleus but also located partially in the cytoplasm.</text>
</comment>
<comment type="alternative products">
    <event type="alternative splicing"/>
    <isoform>
        <id>Q07666-1</id>
        <name evidence="11">1</name>
        <sequence type="displayed"/>
    </isoform>
    <isoform>
        <id>Q07666-2</id>
        <name evidence="30">2</name>
        <sequence type="described" ref="VSP_051719"/>
    </isoform>
    <isoform>
        <id>Q07666-3</id>
        <name evidence="24">3</name>
        <name evidence="24">DeltaKH</name>
        <sequence type="described" ref="VSP_051720"/>
    </isoform>
</comment>
<comment type="tissue specificity">
    <text evidence="24">Ubiquitously expressed in all tissue examined. Isoform 1 is expressed at lower levels in brain, skeletal muscle, and liver whereas isoform 3 is intensified in skeletal muscle and in liver.</text>
</comment>
<comment type="developmental stage">
    <text evidence="24">Isoform 3 is only expressed in growth-arrested cells.</text>
</comment>
<comment type="domain">
    <text evidence="2">The KH domain is required for binding to RNA.</text>
</comment>
<comment type="domain">
    <text evidence="1">The Pro-rich domains are flanked by Arg/Gly-rich motifs which can be asymmetric dimethylated on arginine residues to give the DMA/Gly-rich regions. Selective methylation on these motifs can modulate protein-protein interactions (By similarity).</text>
</comment>
<comment type="PTM">
    <text evidence="9 13 14 18 23 25">Tyrosine phosphorylated by several non-receptor tyrosine kinases including LCK, FYN and JAK3. Also tyrosine phosphorylated by the non-receptor tyrosine kinase SRMS in an EGF-dependent manner (PubMed:29496907). Negatively correlates with ability to bind RNA but required for many interactions with proteins. Phosphorylation by PTK6 negatively regulates its RNA binding ability. Phosphorylation by PTK6 at Tyr-440 dictates the nuclear localization of KHDRBS1. Phosphorylation at Tyr-387 disrupts interaction with APC. Phosphorylation at tyrosine residues by FYN inverts activity on modulation of BCL2L1 alternative splicing.</text>
</comment>
<comment type="PTM">
    <text evidence="12 21">Acetylated (PubMed:15021911, PubMed:26080397). Positively correlates with ability to bind RNA (PubMed:15021911). Deacetylated by HDAC6; this regulates alternative splicing by inhibiting the inclusion of CD44 alternate exons (PubMed:26080397).</text>
</comment>
<comment type="PTM">
    <text evidence="10 11 26">Arginine methylation is required for nuclear localization. Also can affect interaction with other proteins. Inhibits interaction with Src-like SH3 domains, but not interaction with WW domains of WBP4/FBP21 and FNBP4/FBP30.</text>
</comment>
<comment type="similarity">
    <text evidence="4">Belongs to the KHDRBS family.</text>
</comment>
<comment type="sequence caution" evidence="30">
    <conflict type="miscellaneous discrepancy">
        <sequence resource="EMBL-CDS" id="AAH10132"/>
    </conflict>
    <text>Intron retention.</text>
</comment>
<dbReference type="EMBL" id="M88108">
    <property type="protein sequence ID" value="AAA59990.1"/>
    <property type="molecule type" value="mRNA"/>
</dbReference>
<dbReference type="EMBL" id="U78971">
    <property type="protein sequence ID" value="AAB47504.1"/>
    <property type="molecule type" value="mRNA"/>
</dbReference>
<dbReference type="EMBL" id="AK091346">
    <property type="protein sequence ID" value="BAC03643.1"/>
    <property type="molecule type" value="mRNA"/>
</dbReference>
<dbReference type="EMBL" id="AL139249">
    <property type="status" value="NOT_ANNOTATED_CDS"/>
    <property type="molecule type" value="Genomic_DNA"/>
</dbReference>
<dbReference type="EMBL" id="AL445248">
    <property type="status" value="NOT_ANNOTATED_CDS"/>
    <property type="molecule type" value="Genomic_DNA"/>
</dbReference>
<dbReference type="EMBL" id="CH471059">
    <property type="protein sequence ID" value="EAX07576.1"/>
    <property type="molecule type" value="Genomic_DNA"/>
</dbReference>
<dbReference type="EMBL" id="CH471059">
    <property type="protein sequence ID" value="EAX07577.1"/>
    <property type="molecule type" value="Genomic_DNA"/>
</dbReference>
<dbReference type="EMBL" id="BC000717">
    <property type="protein sequence ID" value="AAH00717.1"/>
    <property type="molecule type" value="mRNA"/>
</dbReference>
<dbReference type="EMBL" id="BC010132">
    <property type="protein sequence ID" value="AAH10132.1"/>
    <property type="status" value="ALT_SEQ"/>
    <property type="molecule type" value="mRNA"/>
</dbReference>
<dbReference type="EMBL" id="BC019109">
    <property type="protein sequence ID" value="AAH19109.1"/>
    <property type="molecule type" value="mRNA"/>
</dbReference>
<dbReference type="CCDS" id="CCDS350.1">
    <molecule id="Q07666-1"/>
</dbReference>
<dbReference type="CCDS" id="CCDS60067.1">
    <molecule id="Q07666-3"/>
</dbReference>
<dbReference type="PIR" id="A38219">
    <property type="entry name" value="A38219"/>
</dbReference>
<dbReference type="RefSeq" id="NP_001258807.1">
    <molecule id="Q07666-3"/>
    <property type="nucleotide sequence ID" value="NM_001271878.2"/>
</dbReference>
<dbReference type="RefSeq" id="NP_006550.1">
    <molecule id="Q07666-1"/>
    <property type="nucleotide sequence ID" value="NM_006559.3"/>
</dbReference>
<dbReference type="PDB" id="2XA6">
    <property type="method" value="NMR"/>
    <property type="chains" value="A/B=97-135"/>
</dbReference>
<dbReference type="PDB" id="3QHE">
    <property type="method" value="X-ray"/>
    <property type="resolution" value="2.40 A"/>
    <property type="chains" value="B/D=365-419"/>
</dbReference>
<dbReference type="PDB" id="7Z89">
    <property type="method" value="X-ray"/>
    <property type="resolution" value="2.76 A"/>
    <property type="chains" value="AAA/BBB=144-261"/>
</dbReference>
<dbReference type="PDB" id="7Z8A">
    <property type="method" value="X-ray"/>
    <property type="resolution" value="2.06 A"/>
    <property type="chains" value="AAA=145-259"/>
</dbReference>
<dbReference type="PDB" id="7Z9A">
    <property type="method" value="X-ray"/>
    <property type="resolution" value="2.57 A"/>
    <property type="chains" value="AAA=143-259"/>
</dbReference>
<dbReference type="PDB" id="7Z9B">
    <property type="method" value="X-ray"/>
    <property type="resolution" value="3.33 A"/>
    <property type="chains" value="AAA/BBB/CCC=144-259"/>
</dbReference>
<dbReference type="PDB" id="7ZAB">
    <property type="method" value="X-ray"/>
    <property type="resolution" value="2.46 A"/>
    <property type="chains" value="AAA=143-260"/>
</dbReference>
<dbReference type="PDB" id="7ZAC">
    <property type="method" value="X-ray"/>
    <property type="resolution" value="2.08 A"/>
    <property type="chains" value="AAA=145-259"/>
</dbReference>
<dbReference type="PDB" id="7ZAF">
    <property type="method" value="X-ray"/>
    <property type="resolution" value="2.71 A"/>
    <property type="chains" value="AAA=144-259"/>
</dbReference>
<dbReference type="PDB" id="7ZAM">
    <property type="method" value="X-ray"/>
    <property type="resolution" value="2.79 A"/>
    <property type="chains" value="AAA/BBB=143-260"/>
</dbReference>
<dbReference type="PDBsum" id="2XA6"/>
<dbReference type="PDBsum" id="3QHE"/>
<dbReference type="PDBsum" id="7Z89"/>
<dbReference type="PDBsum" id="7Z8A"/>
<dbReference type="PDBsum" id="7Z9A"/>
<dbReference type="PDBsum" id="7Z9B"/>
<dbReference type="PDBsum" id="7ZAB"/>
<dbReference type="PDBsum" id="7ZAC"/>
<dbReference type="PDBsum" id="7ZAF"/>
<dbReference type="PDBsum" id="7ZAM"/>
<dbReference type="BMRB" id="Q07666"/>
<dbReference type="SMR" id="Q07666"/>
<dbReference type="BioGRID" id="115900">
    <property type="interactions" value="388"/>
</dbReference>
<dbReference type="CORUM" id="Q07666"/>
<dbReference type="DIP" id="DIP-29007N"/>
<dbReference type="FunCoup" id="Q07666">
    <property type="interactions" value="4427"/>
</dbReference>
<dbReference type="IntAct" id="Q07666">
    <property type="interactions" value="189"/>
</dbReference>
<dbReference type="MINT" id="Q07666"/>
<dbReference type="STRING" id="9606.ENSP00000313829"/>
<dbReference type="GlyGen" id="Q07666">
    <property type="glycosylation" value="12 sites, 1 O-linked glycan (11 sites)"/>
</dbReference>
<dbReference type="iPTMnet" id="Q07666"/>
<dbReference type="MetOSite" id="Q07666"/>
<dbReference type="PhosphoSitePlus" id="Q07666"/>
<dbReference type="SwissPalm" id="Q07666"/>
<dbReference type="BioMuta" id="KHDRBS1"/>
<dbReference type="DMDM" id="62511098"/>
<dbReference type="jPOST" id="Q07666"/>
<dbReference type="MassIVE" id="Q07666"/>
<dbReference type="PaxDb" id="9606-ENSP00000313829"/>
<dbReference type="PeptideAtlas" id="Q07666"/>
<dbReference type="ProteomicsDB" id="58523">
    <molecule id="Q07666-1"/>
</dbReference>
<dbReference type="ProteomicsDB" id="58524">
    <molecule id="Q07666-2"/>
</dbReference>
<dbReference type="ProteomicsDB" id="58525">
    <molecule id="Q07666-3"/>
</dbReference>
<dbReference type="Pumba" id="Q07666"/>
<dbReference type="TopDownProteomics" id="Q07666-1">
    <molecule id="Q07666-1"/>
</dbReference>
<dbReference type="TopDownProteomics" id="Q07666-3">
    <molecule id="Q07666-3"/>
</dbReference>
<dbReference type="Antibodypedia" id="3944">
    <property type="antibodies" value="338 antibodies from 39 providers"/>
</dbReference>
<dbReference type="DNASU" id="10657"/>
<dbReference type="Ensembl" id="ENST00000327300.12">
    <molecule id="Q07666-1"/>
    <property type="protein sequence ID" value="ENSP00000313829.7"/>
    <property type="gene ID" value="ENSG00000121774.18"/>
</dbReference>
<dbReference type="Ensembl" id="ENST00000492989.1">
    <molecule id="Q07666-3"/>
    <property type="protein sequence ID" value="ENSP00000417731.1"/>
    <property type="gene ID" value="ENSG00000121774.18"/>
</dbReference>
<dbReference type="GeneID" id="10657"/>
<dbReference type="KEGG" id="hsa:10657"/>
<dbReference type="MANE-Select" id="ENST00000327300.12">
    <property type="protein sequence ID" value="ENSP00000313829.7"/>
    <property type="RefSeq nucleotide sequence ID" value="NM_006559.3"/>
    <property type="RefSeq protein sequence ID" value="NP_006550.1"/>
</dbReference>
<dbReference type="UCSC" id="uc001bua.3">
    <molecule id="Q07666-1"/>
    <property type="organism name" value="human"/>
</dbReference>
<dbReference type="AGR" id="HGNC:18116"/>
<dbReference type="CTD" id="10657"/>
<dbReference type="DisGeNET" id="10657"/>
<dbReference type="GeneCards" id="KHDRBS1"/>
<dbReference type="HGNC" id="HGNC:18116">
    <property type="gene designation" value="KHDRBS1"/>
</dbReference>
<dbReference type="HPA" id="ENSG00000121774">
    <property type="expression patterns" value="Low tissue specificity"/>
</dbReference>
<dbReference type="MIM" id="602489">
    <property type="type" value="gene"/>
</dbReference>
<dbReference type="neXtProt" id="NX_Q07666"/>
<dbReference type="OpenTargets" id="ENSG00000121774"/>
<dbReference type="PharmGKB" id="PA30092"/>
<dbReference type="VEuPathDB" id="HostDB:ENSG00000121774"/>
<dbReference type="eggNOG" id="KOG1588">
    <property type="taxonomic scope" value="Eukaryota"/>
</dbReference>
<dbReference type="GeneTree" id="ENSGT00940000155718"/>
<dbReference type="HOGENOM" id="CLU_034976_0_0_1"/>
<dbReference type="InParanoid" id="Q07666"/>
<dbReference type="OMA" id="GYDENYT"/>
<dbReference type="OrthoDB" id="6777263at2759"/>
<dbReference type="PAN-GO" id="Q07666">
    <property type="GO annotations" value="4 GO annotations based on evolutionary models"/>
</dbReference>
<dbReference type="PhylomeDB" id="Q07666"/>
<dbReference type="TreeFam" id="TF314878"/>
<dbReference type="PathwayCommons" id="Q07666"/>
<dbReference type="Reactome" id="R-HSA-8849468">
    <property type="pathway name" value="PTK6 Regulates Proteins Involved in RNA Processing"/>
</dbReference>
<dbReference type="SignaLink" id="Q07666"/>
<dbReference type="SIGNOR" id="Q07666"/>
<dbReference type="BioGRID-ORCS" id="10657">
    <property type="hits" value="49 hits in 1163 CRISPR screens"/>
</dbReference>
<dbReference type="CD-CODE" id="462A97B5">
    <property type="entry name" value="Leucocyte nuclear body"/>
</dbReference>
<dbReference type="CD-CODE" id="62EA6512">
    <property type="entry name" value="Sam68 nuclear body"/>
</dbReference>
<dbReference type="CD-CODE" id="91857CE7">
    <property type="entry name" value="Nucleolus"/>
</dbReference>
<dbReference type="CD-CODE" id="DEE660B4">
    <property type="entry name" value="Stress granule"/>
</dbReference>
<dbReference type="CD-CODE" id="F85A2E29">
    <property type="entry name" value="IMP1 RNP granule"/>
</dbReference>
<dbReference type="ChiTaRS" id="KHDRBS1">
    <property type="organism name" value="human"/>
</dbReference>
<dbReference type="EvolutionaryTrace" id="Q07666"/>
<dbReference type="GeneWiki" id="KHDRBS1"/>
<dbReference type="GenomeRNAi" id="10657"/>
<dbReference type="Pharos" id="Q07666">
    <property type="development level" value="Tbio"/>
</dbReference>
<dbReference type="PRO" id="PR:Q07666"/>
<dbReference type="Proteomes" id="UP000005640">
    <property type="component" value="Chromosome 1"/>
</dbReference>
<dbReference type="RNAct" id="Q07666">
    <property type="molecule type" value="protein"/>
</dbReference>
<dbReference type="Bgee" id="ENSG00000121774">
    <property type="expression patterns" value="Expressed in germinal epithelium of ovary and 208 other cell types or tissues"/>
</dbReference>
<dbReference type="GO" id="GO:0005737">
    <property type="term" value="C:cytoplasm"/>
    <property type="evidence" value="ECO:0000314"/>
    <property type="project" value="UniProtKB"/>
</dbReference>
<dbReference type="GO" id="GO:0005829">
    <property type="term" value="C:cytosol"/>
    <property type="evidence" value="ECO:0000304"/>
    <property type="project" value="Reactome"/>
</dbReference>
<dbReference type="GO" id="GO:0070618">
    <property type="term" value="C:Grb2-Sos complex"/>
    <property type="evidence" value="ECO:0007669"/>
    <property type="project" value="Ensembl"/>
</dbReference>
<dbReference type="GO" id="GO:0016020">
    <property type="term" value="C:membrane"/>
    <property type="evidence" value="ECO:0000314"/>
    <property type="project" value="UniProtKB"/>
</dbReference>
<dbReference type="GO" id="GO:0005654">
    <property type="term" value="C:nucleoplasm"/>
    <property type="evidence" value="ECO:0000314"/>
    <property type="project" value="HPA"/>
</dbReference>
<dbReference type="GO" id="GO:0005634">
    <property type="term" value="C:nucleus"/>
    <property type="evidence" value="ECO:0000314"/>
    <property type="project" value="UniProtKB"/>
</dbReference>
<dbReference type="GO" id="GO:0032991">
    <property type="term" value="C:protein-containing complex"/>
    <property type="evidence" value="ECO:0000314"/>
    <property type="project" value="UniProtKB"/>
</dbReference>
<dbReference type="GO" id="GO:0003677">
    <property type="term" value="F:DNA binding"/>
    <property type="evidence" value="ECO:0000304"/>
    <property type="project" value="ProtInc"/>
</dbReference>
<dbReference type="GO" id="GO:0042802">
    <property type="term" value="F:identical protein binding"/>
    <property type="evidence" value="ECO:0000314"/>
    <property type="project" value="UniProtKB"/>
</dbReference>
<dbReference type="GO" id="GO:0140678">
    <property type="term" value="F:molecular function inhibitor activity"/>
    <property type="evidence" value="ECO:0000269"/>
    <property type="project" value="DisProt"/>
</dbReference>
<dbReference type="GO" id="GO:0003729">
    <property type="term" value="F:mRNA binding"/>
    <property type="evidence" value="ECO:0000318"/>
    <property type="project" value="GO_Central"/>
</dbReference>
<dbReference type="GO" id="GO:0008143">
    <property type="term" value="F:poly(A) binding"/>
    <property type="evidence" value="ECO:0000314"/>
    <property type="project" value="MGI"/>
</dbReference>
<dbReference type="GO" id="GO:0008266">
    <property type="term" value="F:poly(U) RNA binding"/>
    <property type="evidence" value="ECO:0000314"/>
    <property type="project" value="MGI"/>
</dbReference>
<dbReference type="GO" id="GO:0019904">
    <property type="term" value="F:protein domain specific binding"/>
    <property type="evidence" value="ECO:0000353"/>
    <property type="project" value="UniProtKB"/>
</dbReference>
<dbReference type="GO" id="GO:1990782">
    <property type="term" value="F:protein tyrosine kinase binding"/>
    <property type="evidence" value="ECO:0000353"/>
    <property type="project" value="UniProtKB"/>
</dbReference>
<dbReference type="GO" id="GO:0044877">
    <property type="term" value="F:protein-containing complex binding"/>
    <property type="evidence" value="ECO:0007669"/>
    <property type="project" value="Ensembl"/>
</dbReference>
<dbReference type="GO" id="GO:0003723">
    <property type="term" value="F:RNA binding"/>
    <property type="evidence" value="ECO:0000314"/>
    <property type="project" value="UniProtKB"/>
</dbReference>
<dbReference type="GO" id="GO:0042169">
    <property type="term" value="F:SH2 domain binding"/>
    <property type="evidence" value="ECO:0000314"/>
    <property type="project" value="UniProtKB"/>
</dbReference>
<dbReference type="GO" id="GO:0017124">
    <property type="term" value="F:SH3 domain binding"/>
    <property type="evidence" value="ECO:0000314"/>
    <property type="project" value="UniProtKB"/>
</dbReference>
<dbReference type="GO" id="GO:0035591">
    <property type="term" value="F:signaling adaptor activity"/>
    <property type="evidence" value="ECO:0000314"/>
    <property type="project" value="UniProtKB"/>
</dbReference>
<dbReference type="GO" id="GO:0000082">
    <property type="term" value="P:G1/S transition of mitotic cell cycle"/>
    <property type="evidence" value="ECO:0000304"/>
    <property type="project" value="GO_Central"/>
</dbReference>
<dbReference type="GO" id="GO:0000086">
    <property type="term" value="P:G2/M transition of mitotic cell cycle"/>
    <property type="evidence" value="ECO:0000250"/>
    <property type="project" value="UniProtKB"/>
</dbReference>
<dbReference type="GO" id="GO:0006397">
    <property type="term" value="P:mRNA processing"/>
    <property type="evidence" value="ECO:0000304"/>
    <property type="project" value="ProtInc"/>
</dbReference>
<dbReference type="GO" id="GO:0045892">
    <property type="term" value="P:negative regulation of DNA-templated transcription"/>
    <property type="evidence" value="ECO:0000250"/>
    <property type="project" value="UniProtKB"/>
</dbReference>
<dbReference type="GO" id="GO:0000122">
    <property type="term" value="P:negative regulation of transcription by RNA polymerase II"/>
    <property type="evidence" value="ECO:0007669"/>
    <property type="project" value="Ensembl"/>
</dbReference>
<dbReference type="GO" id="GO:0046833">
    <property type="term" value="P:positive regulation of RNA export from nucleus"/>
    <property type="evidence" value="ECO:0000314"/>
    <property type="project" value="UniProtKB"/>
</dbReference>
<dbReference type="GO" id="GO:0045948">
    <property type="term" value="P:positive regulation of translational initiation"/>
    <property type="evidence" value="ECO:0000314"/>
    <property type="project" value="UniProtKB"/>
</dbReference>
<dbReference type="GO" id="GO:0000381">
    <property type="term" value="P:regulation of alternative mRNA splicing, via spliceosome"/>
    <property type="evidence" value="ECO:0000314"/>
    <property type="project" value="UniProtKB"/>
</dbReference>
<dbReference type="GO" id="GO:0042981">
    <property type="term" value="P:regulation of apoptotic process"/>
    <property type="evidence" value="ECO:0000315"/>
    <property type="project" value="DisProt"/>
</dbReference>
<dbReference type="GO" id="GO:0051726">
    <property type="term" value="P:regulation of cell cycle"/>
    <property type="evidence" value="ECO:0000315"/>
    <property type="project" value="DisProt"/>
</dbReference>
<dbReference type="GO" id="GO:0046831">
    <property type="term" value="P:regulation of RNA export from nucleus"/>
    <property type="evidence" value="ECO:0000250"/>
    <property type="project" value="UniProtKB"/>
</dbReference>
<dbReference type="GO" id="GO:0043484">
    <property type="term" value="P:regulation of RNA splicing"/>
    <property type="evidence" value="ECO:0000315"/>
    <property type="project" value="DisProt"/>
</dbReference>
<dbReference type="GO" id="GO:0007283">
    <property type="term" value="P:spermatogenesis"/>
    <property type="evidence" value="ECO:0007669"/>
    <property type="project" value="Ensembl"/>
</dbReference>
<dbReference type="GO" id="GO:0050852">
    <property type="term" value="P:T cell receptor signaling pathway"/>
    <property type="evidence" value="ECO:0000314"/>
    <property type="project" value="UniProtKB"/>
</dbReference>
<dbReference type="CDD" id="cd22468">
    <property type="entry name" value="KH-I_KHDRBS1"/>
    <property type="match status" value="1"/>
</dbReference>
<dbReference type="DisProt" id="DP01705"/>
<dbReference type="FunFam" id="3.30.1370.10:FF:000036">
    <property type="entry name" value="KH RNA binding domain containing, signal transduction associated 1"/>
    <property type="match status" value="1"/>
</dbReference>
<dbReference type="Gene3D" id="3.30.1370.10">
    <property type="entry name" value="K Homology domain, type 1"/>
    <property type="match status" value="1"/>
</dbReference>
<dbReference type="IDEAL" id="IID00619"/>
<dbReference type="InterPro" id="IPR045071">
    <property type="entry name" value="BBP-like"/>
</dbReference>
<dbReference type="InterPro" id="IPR055256">
    <property type="entry name" value="KH_1_KHDC4/BBP-like"/>
</dbReference>
<dbReference type="InterPro" id="IPR004087">
    <property type="entry name" value="KH_dom"/>
</dbReference>
<dbReference type="InterPro" id="IPR036612">
    <property type="entry name" value="KH_dom_type_1_sf"/>
</dbReference>
<dbReference type="InterPro" id="IPR032571">
    <property type="entry name" value="Qua1_dom"/>
</dbReference>
<dbReference type="InterPro" id="IPR032335">
    <property type="entry name" value="Sam68-YY"/>
</dbReference>
<dbReference type="PANTHER" id="PTHR11208:SF30">
    <property type="entry name" value="KH DOMAIN-CONTAINING, RNA-BINDING, SIGNAL TRANSDUCTION-ASSOCIATED PROTEIN 1"/>
    <property type="match status" value="1"/>
</dbReference>
<dbReference type="PANTHER" id="PTHR11208">
    <property type="entry name" value="RNA-BINDING PROTEIN RELATED"/>
    <property type="match status" value="1"/>
</dbReference>
<dbReference type="Pfam" id="PF22675">
    <property type="entry name" value="KH-I_KHDC4-BBP"/>
    <property type="match status" value="1"/>
</dbReference>
<dbReference type="Pfam" id="PF16274">
    <property type="entry name" value="Qua1"/>
    <property type="match status" value="1"/>
</dbReference>
<dbReference type="Pfam" id="PF16568">
    <property type="entry name" value="Sam68-YY"/>
    <property type="match status" value="1"/>
</dbReference>
<dbReference type="SMART" id="SM00322">
    <property type="entry name" value="KH"/>
    <property type="match status" value="1"/>
</dbReference>
<dbReference type="SUPFAM" id="SSF54791">
    <property type="entry name" value="Eukaryotic type KH-domain (KH-domain type I)"/>
    <property type="match status" value="1"/>
</dbReference>
<dbReference type="PROSITE" id="PS50084">
    <property type="entry name" value="KH_TYPE_1"/>
    <property type="match status" value="1"/>
</dbReference>
<feature type="chain" id="PRO_0000050124" description="KH domain-containing, RNA-binding, signal transduction-associated protein 1">
    <location>
        <begin position="1"/>
        <end position="443"/>
    </location>
</feature>
<feature type="domain" description="KH" evidence="5">
    <location>
        <begin position="171"/>
        <end position="197"/>
    </location>
</feature>
<feature type="region of interest" description="Disordered" evidence="6">
    <location>
        <begin position="1"/>
        <end position="96"/>
    </location>
</feature>
<feature type="region of interest" description="Involved in homodimerization" evidence="32">
    <location>
        <begin position="100"/>
        <end position="260"/>
    </location>
</feature>
<feature type="region of interest" description="Disordered" evidence="6">
    <location>
        <begin position="280"/>
        <end position="316"/>
    </location>
</feature>
<feature type="region of interest" description="Disordered" evidence="6">
    <location>
        <begin position="327"/>
        <end position="346"/>
    </location>
</feature>
<feature type="region of interest" description="Interaction with HNRNPA1" evidence="14">
    <location>
        <begin position="351"/>
        <end position="443"/>
    </location>
</feature>
<feature type="region of interest" description="Interaction with ZBTB7A" evidence="20">
    <location>
        <begin position="400"/>
        <end position="420"/>
    </location>
</feature>
<feature type="region of interest" description="Disordered" evidence="6">
    <location>
        <begin position="411"/>
        <end position="443"/>
    </location>
</feature>
<feature type="compositionally biased region" description="Low complexity" evidence="6">
    <location>
        <begin position="10"/>
        <end position="21"/>
    </location>
</feature>
<feature type="compositionally biased region" description="Low complexity" evidence="6">
    <location>
        <begin position="280"/>
        <end position="293"/>
    </location>
</feature>
<feature type="compositionally biased region" description="Low complexity" evidence="6">
    <location>
        <begin position="307"/>
        <end position="316"/>
    </location>
</feature>
<feature type="compositionally biased region" description="Basic and acidic residues" evidence="6">
    <location>
        <begin position="434"/>
        <end position="443"/>
    </location>
</feature>
<feature type="modified residue" description="Phosphoserine" evidence="44 46">
    <location>
        <position position="18"/>
    </location>
</feature>
<feature type="modified residue" description="Phosphoserine" evidence="41 44">
    <location>
        <position position="20"/>
    </location>
</feature>
<feature type="modified residue" description="Phosphoserine" evidence="41 44">
    <location>
        <position position="29"/>
    </location>
</feature>
<feature type="modified residue" description="Phosphothreonine" evidence="44">
    <location>
        <position position="33"/>
    </location>
</feature>
<feature type="modified residue" description="Asymmetric dimethylarginine; by PRMT1" evidence="10">
    <location>
        <position position="45"/>
    </location>
</feature>
<feature type="modified residue" description="Asymmetric dimethylarginine; partial; by PRMT1" evidence="10">
    <location>
        <position position="52"/>
    </location>
</feature>
<feature type="modified residue" description="Phosphoserine" evidence="42 46">
    <location>
        <position position="58"/>
    </location>
</feature>
<feature type="modified residue" description="Phosphothreonine; by MAPK1" evidence="2">
    <location>
        <position position="84"/>
    </location>
</feature>
<feature type="modified residue" description="Phosphoserine" evidence="2">
    <location>
        <position position="113"/>
    </location>
</feature>
<feature type="modified residue" description="Phosphoserine" evidence="44">
    <location>
        <position position="150"/>
    </location>
</feature>
<feature type="modified residue" description="N6-acetyllysine; alternate" evidence="43">
    <location>
        <position position="175"/>
    </location>
</feature>
<feature type="modified residue" description="Phosphothreonine" evidence="44">
    <location>
        <position position="183"/>
    </location>
</feature>
<feature type="modified residue" description="Omega-N-methylarginine" evidence="45">
    <location>
        <position position="282"/>
    </location>
</feature>
<feature type="modified residue" description="Omega-N-methylarginine" evidence="45">
    <location>
        <position position="284"/>
    </location>
</feature>
<feature type="modified residue" description="Omega-N-methylarginine" evidence="2">
    <location>
        <position position="291"/>
    </location>
</feature>
<feature type="modified residue" description="Asymmetric dimethylarginine; by PRMT1" evidence="10">
    <location>
        <position position="304"/>
    </location>
</feature>
<feature type="modified residue" description="Omega-N-methylarginine; by PRMT1" evidence="10">
    <location>
        <position position="310"/>
    </location>
</feature>
<feature type="modified residue" description="Omega-N-methylarginine; by PRMT1" evidence="10">
    <location>
        <position position="315"/>
    </location>
</feature>
<feature type="modified residue" description="Dimethylated arginine; in A2780 ovarian carcinoma cell line" evidence="26">
    <location>
        <position position="320"/>
    </location>
</feature>
<feature type="modified residue" description="Omega-N-methylarginine; by PRMT1" evidence="10">
    <location>
        <position position="320"/>
    </location>
</feature>
<feature type="modified residue" description="Omega-N-methylarginine; by PRMT1" evidence="10">
    <location>
        <position position="325"/>
    </location>
</feature>
<feature type="modified residue" description="Asymmetric dimethylarginine; alternate" evidence="2">
    <location>
        <position position="331"/>
    </location>
</feature>
<feature type="modified residue" description="Dimethylated arginine; in A2780 ovarian carcinoma cell line" evidence="26">
    <location>
        <position position="331"/>
    </location>
</feature>
<feature type="modified residue" description="Omega-N-methylarginine; by PRMT1; alternate" evidence="26 45">
    <location>
        <position position="331"/>
    </location>
</feature>
<feature type="modified residue" description="Dimethylated arginine; in A2780 ovarian carcinoma cell line" evidence="26">
    <location>
        <position position="340"/>
    </location>
</feature>
<feature type="modified residue" description="Omega-N-methylarginine; by PRMT1" evidence="40 45">
    <location>
        <position position="340"/>
    </location>
</feature>
<feature type="modified residue" description="Phosphotyrosine" evidence="31">
    <location>
        <position position="387"/>
    </location>
</feature>
<feature type="modified residue" description="Phosphoserine" evidence="46">
    <location>
        <position position="390"/>
    </location>
</feature>
<feature type="modified residue" description="Phosphotyrosine; by PTK6" evidence="13">
    <location>
        <position position="435"/>
    </location>
</feature>
<feature type="modified residue" description="Phosphotyrosine; by PTK6" evidence="13">
    <location>
        <position position="440"/>
    </location>
</feature>
<feature type="modified residue" description="Phosphotyrosine; by PTK6" evidence="13">
    <location>
        <position position="443"/>
    </location>
</feature>
<feature type="cross-link" description="Glycyl lysine isopeptide (Lys-Gly) (interchain with G-Cter in SUMO2)" evidence="51">
    <location>
        <position position="96"/>
    </location>
</feature>
<feature type="cross-link" description="Glycyl lysine isopeptide (Lys-Gly) (interchain with G-Cter in SUMO2)" evidence="47 48 49 50 51">
    <location>
        <position position="102"/>
    </location>
</feature>
<feature type="cross-link" description="Glycyl lysine isopeptide (Lys-Gly) (interchain with G-Cter in SUMO2)" evidence="51">
    <location>
        <position position="139"/>
    </location>
</feature>
<feature type="cross-link" description="Glycyl lysine isopeptide (Lys-Gly) (interchain with G-Cter in SUMO2); alternate" evidence="51">
    <location>
        <position position="175"/>
    </location>
</feature>
<feature type="cross-link" description="Glycyl lysine isopeptide (Lys-Gly) (interchain with G-Cter in SUMO2)" evidence="51">
    <location>
        <position position="432"/>
    </location>
</feature>
<feature type="splice variant" id="VSP_051719" description="In isoform 2." evidence="28">
    <location>
        <begin position="37"/>
        <end position="61"/>
    </location>
</feature>
<feature type="splice variant" id="VSP_051720" description="In isoform 3." evidence="29">
    <location>
        <begin position="169"/>
        <end position="207"/>
    </location>
</feature>
<feature type="mutagenesis site" description="Impairs homodimerization." evidence="17">
    <original>Y</original>
    <variation>S</variation>
    <location>
        <position position="103"/>
    </location>
</feature>
<feature type="mutagenesis site" description="Impairs homodimerization." evidence="17">
    <original>E</original>
    <variation>A</variation>
    <location>
        <position position="110"/>
    </location>
</feature>
<feature type="mutagenesis site" description="Disrupts homodimerization, impairs influence on alternative splicing." evidence="17">
    <original>F</original>
    <variation>S</variation>
    <location>
        <position position="118"/>
    </location>
</feature>
<feature type="mutagenesis site" description="Disrupts binding to poly(A). Decreased binding to the BCL2L1 mRNA. Loss of function in BCL2L1 splicing. Changed nuclear localization." evidence="14">
    <original>V</original>
    <variation>F</variation>
    <location>
        <position position="229"/>
    </location>
</feature>
<feature type="mutagenesis site" description="Fails to influence alternative splicing of CD44, NRXN2 and NRXN3." evidence="22">
    <original>Y</original>
    <variation>E</variation>
    <location>
        <position position="241"/>
    </location>
</feature>
<feature type="mutagenesis site" description="Disrupts interaction with APC." evidence="18">
    <original>E</original>
    <variation>K</variation>
    <location>
        <position position="381"/>
    </location>
</feature>
<feature type="mutagenesis site" description="Impairs interaction with APC." evidence="18">
    <original>Y</original>
    <variation>K</variation>
    <location>
        <position position="383"/>
    </location>
</feature>
<feature type="mutagenesis site" description="Disrupts interaction with APC." evidence="18">
    <original>E</original>
    <variation>K</variation>
    <location>
        <position position="384"/>
    </location>
</feature>
<feature type="mutagenesis site" description="No effect on the nuclear localization." evidence="13">
    <original>Y</original>
    <variation>F</variation>
    <location>
        <position position="435"/>
    </location>
</feature>
<feature type="mutagenesis site" description="Completely blocks nuclear localization." evidence="13">
    <original>Y</original>
    <variation>F</variation>
    <location>
        <position position="440"/>
    </location>
</feature>
<feature type="mutagenesis site" description="No effect on the nuclear localization." evidence="13">
    <original>Y</original>
    <variation>F</variation>
    <location>
        <position position="443"/>
    </location>
</feature>
<feature type="helix" evidence="52">
    <location>
        <begin position="100"/>
        <end position="113"/>
    </location>
</feature>
<feature type="helix" evidence="52">
    <location>
        <begin position="119"/>
        <end position="134"/>
    </location>
</feature>
<proteinExistence type="evidence at protein level"/>
<keyword id="KW-0002">3D-structure</keyword>
<keyword id="KW-0007">Acetylation</keyword>
<keyword id="KW-0025">Alternative splicing</keyword>
<keyword id="KW-0131">Cell cycle</keyword>
<keyword id="KW-0963">Cytoplasm</keyword>
<keyword id="KW-0903">Direct protein sequencing</keyword>
<keyword id="KW-1017">Isopeptide bond</keyword>
<keyword id="KW-0472">Membrane</keyword>
<keyword id="KW-0488">Methylation</keyword>
<keyword id="KW-0507">mRNA processing</keyword>
<keyword id="KW-0539">Nucleus</keyword>
<keyword id="KW-0597">Phosphoprotein</keyword>
<keyword id="KW-1267">Proteomics identification</keyword>
<keyword id="KW-1185">Reference proteome</keyword>
<keyword id="KW-0694">RNA-binding</keyword>
<keyword id="KW-0729">SH3-binding</keyword>
<keyword id="KW-0804">Transcription</keyword>
<keyword id="KW-0805">Transcription regulation</keyword>
<keyword id="KW-0832">Ubl conjugation</keyword>
<evidence type="ECO:0000250" key="1"/>
<evidence type="ECO:0000250" key="2">
    <source>
        <dbReference type="UniProtKB" id="Q60749"/>
    </source>
</evidence>
<evidence type="ECO:0000250" key="3">
    <source>
        <dbReference type="UniProtKB" id="Q91V33"/>
    </source>
</evidence>
<evidence type="ECO:0000255" key="4"/>
<evidence type="ECO:0000255" key="5">
    <source>
        <dbReference type="PROSITE-ProRule" id="PRU00117"/>
    </source>
</evidence>
<evidence type="ECO:0000256" key="6">
    <source>
        <dbReference type="SAM" id="MobiDB-lite"/>
    </source>
</evidence>
<evidence type="ECO:0000269" key="7">
    <source>
    </source>
</evidence>
<evidence type="ECO:0000269" key="8">
    <source>
    </source>
</evidence>
<evidence type="ECO:0000269" key="9">
    <source>
    </source>
</evidence>
<evidence type="ECO:0000269" key="10">
    <source>
    </source>
</evidence>
<evidence type="ECO:0000269" key="11">
    <source>
    </source>
</evidence>
<evidence type="ECO:0000269" key="12">
    <source>
    </source>
</evidence>
<evidence type="ECO:0000269" key="13">
    <source>
    </source>
</evidence>
<evidence type="ECO:0000269" key="14">
    <source>
    </source>
</evidence>
<evidence type="ECO:0000269" key="15">
    <source>
    </source>
</evidence>
<evidence type="ECO:0000269" key="16">
    <source>
    </source>
</evidence>
<evidence type="ECO:0000269" key="17">
    <source>
    </source>
</evidence>
<evidence type="ECO:0000269" key="18">
    <source>
    </source>
</evidence>
<evidence type="ECO:0000269" key="19">
    <source>
    </source>
</evidence>
<evidence type="ECO:0000269" key="20">
    <source>
    </source>
</evidence>
<evidence type="ECO:0000269" key="21">
    <source>
    </source>
</evidence>
<evidence type="ECO:0000269" key="22">
    <source>
    </source>
</evidence>
<evidence type="ECO:0000269" key="23">
    <source>
    </source>
</evidence>
<evidence type="ECO:0000269" key="24">
    <source>
    </source>
</evidence>
<evidence type="ECO:0000269" key="25">
    <source>
    </source>
</evidence>
<evidence type="ECO:0000269" key="26">
    <source ref="7"/>
</evidence>
<evidence type="ECO:0000303" key="27">
    <source>
    </source>
</evidence>
<evidence type="ECO:0000303" key="28">
    <source>
    </source>
</evidence>
<evidence type="ECO:0000303" key="29">
    <source>
    </source>
</evidence>
<evidence type="ECO:0000305" key="30"/>
<evidence type="ECO:0000305" key="31">
    <source>
    </source>
</evidence>
<evidence type="ECO:0000305" key="32">
    <source>
    </source>
</evidence>
<evidence type="ECO:0000312" key="33">
    <source>
        <dbReference type="EMBL" id="AAA59990.1"/>
    </source>
</evidence>
<evidence type="ECO:0000312" key="34">
    <source>
        <dbReference type="EMBL" id="AAB47504.1"/>
    </source>
</evidence>
<evidence type="ECO:0000312" key="35">
    <source>
        <dbReference type="EMBL" id="AAH00717.1"/>
    </source>
</evidence>
<evidence type="ECO:0000312" key="36">
    <source>
        <dbReference type="EMBL" id="AAH19109.1"/>
    </source>
</evidence>
<evidence type="ECO:0000312" key="37">
    <source>
        <dbReference type="EMBL" id="AL139249"/>
    </source>
</evidence>
<evidence type="ECO:0000312" key="38">
    <source>
        <dbReference type="EMBL" id="BAC03643.1"/>
    </source>
</evidence>
<evidence type="ECO:0000312" key="39">
    <source>
        <dbReference type="HGNC" id="HGNC:18116"/>
    </source>
</evidence>
<evidence type="ECO:0007744" key="40">
    <source>
    </source>
</evidence>
<evidence type="ECO:0007744" key="41">
    <source>
    </source>
</evidence>
<evidence type="ECO:0007744" key="42">
    <source>
    </source>
</evidence>
<evidence type="ECO:0007744" key="43">
    <source>
    </source>
</evidence>
<evidence type="ECO:0007744" key="44">
    <source>
    </source>
</evidence>
<evidence type="ECO:0007744" key="45">
    <source>
    </source>
</evidence>
<evidence type="ECO:0007744" key="46">
    <source>
    </source>
</evidence>
<evidence type="ECO:0007744" key="47">
    <source>
    </source>
</evidence>
<evidence type="ECO:0007744" key="48">
    <source>
    </source>
</evidence>
<evidence type="ECO:0007744" key="49">
    <source>
    </source>
</evidence>
<evidence type="ECO:0007744" key="50">
    <source>
    </source>
</evidence>
<evidence type="ECO:0007744" key="51">
    <source>
    </source>
</evidence>
<evidence type="ECO:0007829" key="52">
    <source>
        <dbReference type="PDB" id="2XA6"/>
    </source>
</evidence>